<reference key="1">
    <citation type="journal article" date="2015" name="Toxins">
        <title>Molecular cloning and functional analysis of gene clusters for the biosynthesis of indole-diterpenes in Penicillium crustosum and P. janthinellum.</title>
        <authorList>
            <person name="Nicholson M.J."/>
            <person name="Eaton C.J."/>
            <person name="Starkel C."/>
            <person name="Tapper B.A."/>
            <person name="Cox M.P."/>
            <person name="Scott B."/>
        </authorList>
    </citation>
    <scope>NUCLEOTIDE SEQUENCE [GENOMIC DNA]</scope>
    <scope>IDENTIFICATION</scope>
    <scope>FUNCTION</scope>
    <scope>PATHWAY</scope>
    <source>
        <strain>PN2408</strain>
    </source>
</reference>
<dbReference type="EC" id="1.-.-.-" evidence="7"/>
<dbReference type="EMBL" id="KF280651">
    <property type="protein sequence ID" value="AGZ20487.1"/>
    <property type="molecule type" value="Genomic_DNA"/>
</dbReference>
<dbReference type="SMR" id="A0A0E3D8N7"/>
<dbReference type="GlyCosmos" id="A0A0E3D8N7">
    <property type="glycosylation" value="1 site, No reported glycans"/>
</dbReference>
<dbReference type="GO" id="GO:0016020">
    <property type="term" value="C:membrane"/>
    <property type="evidence" value="ECO:0007669"/>
    <property type="project" value="UniProtKB-SubCell"/>
</dbReference>
<dbReference type="GO" id="GO:0020037">
    <property type="term" value="F:heme binding"/>
    <property type="evidence" value="ECO:0007669"/>
    <property type="project" value="InterPro"/>
</dbReference>
<dbReference type="GO" id="GO:0005506">
    <property type="term" value="F:iron ion binding"/>
    <property type="evidence" value="ECO:0007669"/>
    <property type="project" value="InterPro"/>
</dbReference>
<dbReference type="GO" id="GO:0004497">
    <property type="term" value="F:monooxygenase activity"/>
    <property type="evidence" value="ECO:0007669"/>
    <property type="project" value="UniProtKB-KW"/>
</dbReference>
<dbReference type="GO" id="GO:0016705">
    <property type="term" value="F:oxidoreductase activity, acting on paired donors, with incorporation or reduction of molecular oxygen"/>
    <property type="evidence" value="ECO:0007669"/>
    <property type="project" value="InterPro"/>
</dbReference>
<dbReference type="GO" id="GO:0043386">
    <property type="term" value="P:mycotoxin biosynthetic process"/>
    <property type="evidence" value="ECO:0007669"/>
    <property type="project" value="UniProtKB-ARBA"/>
</dbReference>
<dbReference type="CDD" id="cd11041">
    <property type="entry name" value="CYP503A1-like"/>
    <property type="match status" value="1"/>
</dbReference>
<dbReference type="Gene3D" id="1.10.630.10">
    <property type="entry name" value="Cytochrome P450"/>
    <property type="match status" value="1"/>
</dbReference>
<dbReference type="InterPro" id="IPR001128">
    <property type="entry name" value="Cyt_P450"/>
</dbReference>
<dbReference type="InterPro" id="IPR017972">
    <property type="entry name" value="Cyt_P450_CS"/>
</dbReference>
<dbReference type="InterPro" id="IPR002401">
    <property type="entry name" value="Cyt_P450_E_grp-I"/>
</dbReference>
<dbReference type="InterPro" id="IPR036396">
    <property type="entry name" value="Cyt_P450_sf"/>
</dbReference>
<dbReference type="PANTHER" id="PTHR46206">
    <property type="entry name" value="CYTOCHROME P450"/>
    <property type="match status" value="1"/>
</dbReference>
<dbReference type="Pfam" id="PF00067">
    <property type="entry name" value="p450"/>
    <property type="match status" value="1"/>
</dbReference>
<dbReference type="PRINTS" id="PR00463">
    <property type="entry name" value="EP450I"/>
</dbReference>
<dbReference type="SUPFAM" id="SSF48264">
    <property type="entry name" value="Cytochrome P450"/>
    <property type="match status" value="1"/>
</dbReference>
<dbReference type="PROSITE" id="PS00086">
    <property type="entry name" value="CYTOCHROME_P450"/>
    <property type="match status" value="1"/>
</dbReference>
<evidence type="ECO:0000250" key="1">
    <source>
        <dbReference type="UniProtKB" id="P04798"/>
    </source>
</evidence>
<evidence type="ECO:0000255" key="2"/>
<evidence type="ECO:0000255" key="3">
    <source>
        <dbReference type="PROSITE-ProRule" id="PRU00498"/>
    </source>
</evidence>
<evidence type="ECO:0000269" key="4">
    <source>
    </source>
</evidence>
<evidence type="ECO:0000303" key="5">
    <source>
    </source>
</evidence>
<evidence type="ECO:0000305" key="6"/>
<evidence type="ECO:0000305" key="7">
    <source>
    </source>
</evidence>
<sequence length="501" mass="57297">MVLGLLAFIWLMRAWRQSLKIWVDVPSIGKDGILGQWITALQWQQKARSLIQEGYEKHGHYAFKIATPSRWEIFICNEKMIKEYKNLMDDKFSANAVTADMFQTKWTAPGAAEGVHKIPIPLLAKALTWQRNRSSVTGDTYFKEFVTEFLHAWEVETKITSEGPYEFCCFETGTRIVAHLTAKSLVGHPLCRDPEIIDLFAGYGNAVPSSGFLIAMFPGILKPLVAKFCEAPKMSDRLDRIFLSEMKERQLQTGSDASDIMSWLWHWTQENEPGKYSEVDIVRSITSAVFGAIHTTTQVLVHCLFELATRPEYVEPLRQEVQQAVENHGGWEKEGIESMLKLDSFIKECQRFNPLDSGSLARCATNDFTFSNGLKVAKGTYVFAPNAPVLFDERFYPNPHQFDGYRFYRLGQQTGKPQGFRFVATNSNYLQFGDGRHTCPGRYMAADEIRLMLGHILLHYDITTKENEGRPKNWFFKKILFPDMKGVIVLKKRAEVRAVNK</sequence>
<protein>
    <recommendedName>
        <fullName evidence="5">Cytochrome P450 monooxygenase janQ</fullName>
        <ecNumber evidence="7">1.-.-.-</ecNumber>
    </recommendedName>
    <alternativeName>
        <fullName evidence="5">Janthitremanes biosynthesis cluster protein Q</fullName>
    </alternativeName>
</protein>
<feature type="chain" id="PRO_5002410105" description="Cytochrome P450 monooxygenase janQ">
    <location>
        <begin position="1"/>
        <end position="501"/>
    </location>
</feature>
<feature type="transmembrane region" description="Helical" evidence="2">
    <location>
        <begin position="1"/>
        <end position="16"/>
    </location>
</feature>
<feature type="binding site" description="axial binding residue" evidence="1">
    <location>
        <position position="439"/>
    </location>
    <ligand>
        <name>heme</name>
        <dbReference type="ChEBI" id="CHEBI:30413"/>
    </ligand>
    <ligandPart>
        <name>Fe</name>
        <dbReference type="ChEBI" id="CHEBI:18248"/>
    </ligandPart>
</feature>
<feature type="glycosylation site" description="N-linked (GlcNAc...) asparagine" evidence="3">
    <location>
        <position position="132"/>
    </location>
</feature>
<organism>
    <name type="scientific">Penicillium janthinellum</name>
    <name type="common">Penicillium vitale</name>
    <dbReference type="NCBI Taxonomy" id="5079"/>
    <lineage>
        <taxon>Eukaryota</taxon>
        <taxon>Fungi</taxon>
        <taxon>Dikarya</taxon>
        <taxon>Ascomycota</taxon>
        <taxon>Pezizomycotina</taxon>
        <taxon>Eurotiomycetes</taxon>
        <taxon>Eurotiomycetidae</taxon>
        <taxon>Eurotiales</taxon>
        <taxon>Aspergillaceae</taxon>
        <taxon>Penicillium</taxon>
    </lineage>
</organism>
<proteinExistence type="inferred from homology"/>
<name>JANQ_PENJA</name>
<gene>
    <name evidence="5" type="primary">janQ</name>
</gene>
<keyword id="KW-0325">Glycoprotein</keyword>
<keyword id="KW-0349">Heme</keyword>
<keyword id="KW-0408">Iron</keyword>
<keyword id="KW-0472">Membrane</keyword>
<keyword id="KW-0479">Metal-binding</keyword>
<keyword id="KW-0503">Monooxygenase</keyword>
<keyword id="KW-0560">Oxidoreductase</keyword>
<keyword id="KW-0812">Transmembrane</keyword>
<keyword id="KW-1133">Transmembrane helix</keyword>
<accession>A0A0E3D8N7</accession>
<comment type="function">
    <text evidence="4 7">Cytochrome P450 monooxygenase; part of the gene cluster that mediates the biosynthesis of the indole diterpenes janthitremanes such as shearinine K or shearinine A (PubMed:26213965). The geranylgeranyl diphosphate (GGPP) synthase janG catalyzes the first step in janthitremane biosynthesis via conversion of farnesyl pyrophosphate and isopentyl pyrophosphate into geranylgeranyl pyrophosphate (GGPP) (PubMed:26213965). Condensation of indole-3-glycerol phosphate with GGPP by the prenyl transferase janC then forms 3-geranylgeranylindole (3-GGI) (PubMed:26213965). Epoxidation by the FAD-dependent monooxygenase janM leads to a epoxidized-GGI that is substrate of the terpene cyclase janB for cyclization to yield paspaline (PubMed:26213965). Paspaline is subsequently converted to 13-desoxypaspaline by the cytochrome P450 monooxygenase janP, via beta-PC-M6 in a series of alpha-face oxidations (Probable). The cytochrome P450 monooxygenase janQ is proposed to carry out sequential beta-face oxidation steps at C-7 and C-13 of 13-desoxypaspaline to form paspalicine and paspalinine respectively (Probable). The indole diterpene prenyltransferase janD may then convert paspalinine into shearinine K which is substrate of janO and/or additional enzymes for oxidation and cyclization to generate shearinine A (Probable).</text>
</comment>
<comment type="cofactor">
    <cofactor evidence="1">
        <name>heme</name>
        <dbReference type="ChEBI" id="CHEBI:30413"/>
    </cofactor>
</comment>
<comment type="pathway">
    <text evidence="7">Secondary metabolite biosynthesis.</text>
</comment>
<comment type="subcellular location">
    <subcellularLocation>
        <location evidence="2">Membrane</location>
        <topology evidence="2">Single-pass membrane protein</topology>
    </subcellularLocation>
</comment>
<comment type="similarity">
    <text evidence="6">Belongs to the cytochrome P450 family.</text>
</comment>